<evidence type="ECO:0000255" key="1">
    <source>
        <dbReference type="HAMAP-Rule" id="MF_00005"/>
    </source>
</evidence>
<name>ASSY_CLOB6</name>
<protein>
    <recommendedName>
        <fullName evidence="1">Argininosuccinate synthase</fullName>
        <ecNumber evidence="1">6.3.4.5</ecNumber>
    </recommendedName>
    <alternativeName>
        <fullName evidence="1">Citrulline--aspartate ligase</fullName>
    </alternativeName>
</protein>
<keyword id="KW-0028">Amino-acid biosynthesis</keyword>
<keyword id="KW-0055">Arginine biosynthesis</keyword>
<keyword id="KW-0067">ATP-binding</keyword>
<keyword id="KW-0963">Cytoplasm</keyword>
<keyword id="KW-0436">Ligase</keyword>
<keyword id="KW-0547">Nucleotide-binding</keyword>
<accession>C3L1U3</accession>
<dbReference type="EC" id="6.3.4.5" evidence="1"/>
<dbReference type="EMBL" id="CP001083">
    <property type="protein sequence ID" value="ACQ52912.1"/>
    <property type="molecule type" value="Genomic_DNA"/>
</dbReference>
<dbReference type="RefSeq" id="WP_003359277.1">
    <property type="nucleotide sequence ID" value="NC_012658.1"/>
</dbReference>
<dbReference type="SMR" id="C3L1U3"/>
<dbReference type="KEGG" id="cbi:CLJ_B2901"/>
<dbReference type="HOGENOM" id="CLU_032784_4_2_9"/>
<dbReference type="UniPathway" id="UPA00068">
    <property type="reaction ID" value="UER00113"/>
</dbReference>
<dbReference type="Proteomes" id="UP000002333">
    <property type="component" value="Chromosome"/>
</dbReference>
<dbReference type="GO" id="GO:0005737">
    <property type="term" value="C:cytoplasm"/>
    <property type="evidence" value="ECO:0007669"/>
    <property type="project" value="UniProtKB-SubCell"/>
</dbReference>
<dbReference type="GO" id="GO:0004055">
    <property type="term" value="F:argininosuccinate synthase activity"/>
    <property type="evidence" value="ECO:0007669"/>
    <property type="project" value="UniProtKB-UniRule"/>
</dbReference>
<dbReference type="GO" id="GO:0005524">
    <property type="term" value="F:ATP binding"/>
    <property type="evidence" value="ECO:0007669"/>
    <property type="project" value="UniProtKB-UniRule"/>
</dbReference>
<dbReference type="GO" id="GO:0000053">
    <property type="term" value="P:argininosuccinate metabolic process"/>
    <property type="evidence" value="ECO:0007669"/>
    <property type="project" value="TreeGrafter"/>
</dbReference>
<dbReference type="GO" id="GO:0006526">
    <property type="term" value="P:L-arginine biosynthetic process"/>
    <property type="evidence" value="ECO:0007669"/>
    <property type="project" value="UniProtKB-UniRule"/>
</dbReference>
<dbReference type="GO" id="GO:0000050">
    <property type="term" value="P:urea cycle"/>
    <property type="evidence" value="ECO:0007669"/>
    <property type="project" value="TreeGrafter"/>
</dbReference>
<dbReference type="CDD" id="cd01999">
    <property type="entry name" value="ASS"/>
    <property type="match status" value="1"/>
</dbReference>
<dbReference type="FunFam" id="3.40.50.620:FF:000019">
    <property type="entry name" value="Argininosuccinate synthase"/>
    <property type="match status" value="1"/>
</dbReference>
<dbReference type="FunFam" id="3.90.1260.10:FF:000007">
    <property type="entry name" value="Argininosuccinate synthase"/>
    <property type="match status" value="1"/>
</dbReference>
<dbReference type="Gene3D" id="3.90.1260.10">
    <property type="entry name" value="Argininosuccinate synthetase, chain A, domain 2"/>
    <property type="match status" value="1"/>
</dbReference>
<dbReference type="Gene3D" id="3.40.50.620">
    <property type="entry name" value="HUPs"/>
    <property type="match status" value="1"/>
</dbReference>
<dbReference type="Gene3D" id="1.20.5.470">
    <property type="entry name" value="Single helix bin"/>
    <property type="match status" value="1"/>
</dbReference>
<dbReference type="HAMAP" id="MF_00005">
    <property type="entry name" value="Arg_succ_synth_type1"/>
    <property type="match status" value="1"/>
</dbReference>
<dbReference type="InterPro" id="IPR048268">
    <property type="entry name" value="Arginosuc_syn_C"/>
</dbReference>
<dbReference type="InterPro" id="IPR048267">
    <property type="entry name" value="Arginosuc_syn_N"/>
</dbReference>
<dbReference type="InterPro" id="IPR001518">
    <property type="entry name" value="Arginosuc_synth"/>
</dbReference>
<dbReference type="InterPro" id="IPR018223">
    <property type="entry name" value="Arginosuc_synth_CS"/>
</dbReference>
<dbReference type="InterPro" id="IPR023434">
    <property type="entry name" value="Arginosuc_synth_type_1_subfam"/>
</dbReference>
<dbReference type="InterPro" id="IPR024074">
    <property type="entry name" value="AS_cat/multimer_dom_body"/>
</dbReference>
<dbReference type="InterPro" id="IPR014729">
    <property type="entry name" value="Rossmann-like_a/b/a_fold"/>
</dbReference>
<dbReference type="NCBIfam" id="TIGR00032">
    <property type="entry name" value="argG"/>
    <property type="match status" value="1"/>
</dbReference>
<dbReference type="NCBIfam" id="NF001770">
    <property type="entry name" value="PRK00509.1"/>
    <property type="match status" value="1"/>
</dbReference>
<dbReference type="PANTHER" id="PTHR11587">
    <property type="entry name" value="ARGININOSUCCINATE SYNTHASE"/>
    <property type="match status" value="1"/>
</dbReference>
<dbReference type="PANTHER" id="PTHR11587:SF2">
    <property type="entry name" value="ARGININOSUCCINATE SYNTHASE"/>
    <property type="match status" value="1"/>
</dbReference>
<dbReference type="Pfam" id="PF20979">
    <property type="entry name" value="Arginosuc_syn_C"/>
    <property type="match status" value="1"/>
</dbReference>
<dbReference type="Pfam" id="PF00764">
    <property type="entry name" value="Arginosuc_synth"/>
    <property type="match status" value="1"/>
</dbReference>
<dbReference type="SUPFAM" id="SSF52402">
    <property type="entry name" value="Adenine nucleotide alpha hydrolases-like"/>
    <property type="match status" value="1"/>
</dbReference>
<dbReference type="SUPFAM" id="SSF69864">
    <property type="entry name" value="Argininosuccinate synthetase, C-terminal domain"/>
    <property type="match status" value="1"/>
</dbReference>
<dbReference type="PROSITE" id="PS00564">
    <property type="entry name" value="ARGININOSUCCIN_SYN_1"/>
    <property type="match status" value="1"/>
</dbReference>
<dbReference type="PROSITE" id="PS00565">
    <property type="entry name" value="ARGININOSUCCIN_SYN_2"/>
    <property type="match status" value="1"/>
</dbReference>
<comment type="catalytic activity">
    <reaction evidence="1">
        <text>L-citrulline + L-aspartate + ATP = 2-(N(omega)-L-arginino)succinate + AMP + diphosphate + H(+)</text>
        <dbReference type="Rhea" id="RHEA:10932"/>
        <dbReference type="ChEBI" id="CHEBI:15378"/>
        <dbReference type="ChEBI" id="CHEBI:29991"/>
        <dbReference type="ChEBI" id="CHEBI:30616"/>
        <dbReference type="ChEBI" id="CHEBI:33019"/>
        <dbReference type="ChEBI" id="CHEBI:57472"/>
        <dbReference type="ChEBI" id="CHEBI:57743"/>
        <dbReference type="ChEBI" id="CHEBI:456215"/>
        <dbReference type="EC" id="6.3.4.5"/>
    </reaction>
</comment>
<comment type="pathway">
    <text evidence="1">Amino-acid biosynthesis; L-arginine biosynthesis; L-arginine from L-ornithine and carbamoyl phosphate: step 2/3.</text>
</comment>
<comment type="subunit">
    <text evidence="1">Homotetramer.</text>
</comment>
<comment type="subcellular location">
    <subcellularLocation>
        <location evidence="1">Cytoplasm</location>
    </subcellularLocation>
</comment>
<comment type="similarity">
    <text evidence="1">Belongs to the argininosuccinate synthase family. Type 1 subfamily.</text>
</comment>
<organism>
    <name type="scientific">Clostridium botulinum (strain 657 / Type Ba4)</name>
    <dbReference type="NCBI Taxonomy" id="515621"/>
    <lineage>
        <taxon>Bacteria</taxon>
        <taxon>Bacillati</taxon>
        <taxon>Bacillota</taxon>
        <taxon>Clostridia</taxon>
        <taxon>Eubacteriales</taxon>
        <taxon>Clostridiaceae</taxon>
        <taxon>Clostridium</taxon>
    </lineage>
</organism>
<gene>
    <name evidence="1" type="primary">argG</name>
    <name type="ordered locus">CLJ_B2901</name>
</gene>
<sequence length="397" mass="44779">MKEKVVLAYSGGLDTSIIIPWLKENYDLDVIAVCVNVGQGDDMDYVKTKAIKSGASKIYVEDVKEEFVVDYLYKAIKSEALYEQDYMLGTSFARPLMAKKLVEIAHKEQAKYICHGCTGKGNDQVRFEVGVKAQDPTIKIIAPWRIWDIKSREDAIDYAKKVGVEVPVTKKKIYSVDKNLWHVSHEGGDLEDLKNEHKEDMYFMVTPPEKAKDEPTYLEIYFEKGAPVKINGEFLNPVDIIDKLNTIGGENGIGIADIIENRLVGMKSRGIYETPAGTLLYAAHKKLESVTLDKYTYQYKKLVSAQYGELVYNGLWFTALREAIDAFVDKTQENVTGTVKLKLYKGNIKPCSVDTEYALYDEGISSFGESELYSHKDAEGFINLFGLPCKIKALKNF</sequence>
<reference key="1">
    <citation type="submission" date="2008-05" db="EMBL/GenBank/DDBJ databases">
        <title>Genome sequence of Clostridium botulinum Ba4 strain 657.</title>
        <authorList>
            <person name="Shrivastava S."/>
            <person name="Brown J.L."/>
            <person name="Bruce D."/>
            <person name="Detter C."/>
            <person name="Munk C."/>
            <person name="Smith L.A."/>
            <person name="Smith T.J."/>
            <person name="Sutton G."/>
            <person name="Brettin T.S."/>
        </authorList>
    </citation>
    <scope>NUCLEOTIDE SEQUENCE [LARGE SCALE GENOMIC DNA]</scope>
    <source>
        <strain>657 / Type Ba4</strain>
    </source>
</reference>
<feature type="chain" id="PRO_1000201676" description="Argininosuccinate synthase">
    <location>
        <begin position="1"/>
        <end position="397"/>
    </location>
</feature>
<feature type="binding site" evidence="1">
    <location>
        <begin position="8"/>
        <end position="16"/>
    </location>
    <ligand>
        <name>ATP</name>
        <dbReference type="ChEBI" id="CHEBI:30616"/>
    </ligand>
</feature>
<feature type="binding site" evidence="1">
    <location>
        <position position="86"/>
    </location>
    <ligand>
        <name>L-citrulline</name>
        <dbReference type="ChEBI" id="CHEBI:57743"/>
    </ligand>
</feature>
<feature type="binding site" evidence="1">
    <location>
        <position position="91"/>
    </location>
    <ligand>
        <name>L-citrulline</name>
        <dbReference type="ChEBI" id="CHEBI:57743"/>
    </ligand>
</feature>
<feature type="binding site" evidence="1">
    <location>
        <position position="116"/>
    </location>
    <ligand>
        <name>ATP</name>
        <dbReference type="ChEBI" id="CHEBI:30616"/>
    </ligand>
</feature>
<feature type="binding site" evidence="1">
    <location>
        <position position="118"/>
    </location>
    <ligand>
        <name>L-aspartate</name>
        <dbReference type="ChEBI" id="CHEBI:29991"/>
    </ligand>
</feature>
<feature type="binding site" evidence="1">
    <location>
        <position position="122"/>
    </location>
    <ligand>
        <name>L-aspartate</name>
        <dbReference type="ChEBI" id="CHEBI:29991"/>
    </ligand>
</feature>
<feature type="binding site" evidence="1">
    <location>
        <position position="122"/>
    </location>
    <ligand>
        <name>L-citrulline</name>
        <dbReference type="ChEBI" id="CHEBI:57743"/>
    </ligand>
</feature>
<feature type="binding site" evidence="1">
    <location>
        <position position="123"/>
    </location>
    <ligand>
        <name>L-aspartate</name>
        <dbReference type="ChEBI" id="CHEBI:29991"/>
    </ligand>
</feature>
<feature type="binding site" evidence="1">
    <location>
        <position position="126"/>
    </location>
    <ligand>
        <name>L-citrulline</name>
        <dbReference type="ChEBI" id="CHEBI:57743"/>
    </ligand>
</feature>
<feature type="binding site" evidence="1">
    <location>
        <position position="175"/>
    </location>
    <ligand>
        <name>L-citrulline</name>
        <dbReference type="ChEBI" id="CHEBI:57743"/>
    </ligand>
</feature>
<feature type="binding site" evidence="1">
    <location>
        <position position="184"/>
    </location>
    <ligand>
        <name>L-citrulline</name>
        <dbReference type="ChEBI" id="CHEBI:57743"/>
    </ligand>
</feature>
<feature type="binding site" evidence="1">
    <location>
        <position position="260"/>
    </location>
    <ligand>
        <name>L-citrulline</name>
        <dbReference type="ChEBI" id="CHEBI:57743"/>
    </ligand>
</feature>
<feature type="binding site" evidence="1">
    <location>
        <position position="272"/>
    </location>
    <ligand>
        <name>L-citrulline</name>
        <dbReference type="ChEBI" id="CHEBI:57743"/>
    </ligand>
</feature>
<proteinExistence type="inferred from homology"/>